<feature type="chain" id="PRO_1000195395" description="Recombination protein RecR">
    <location>
        <begin position="1"/>
        <end position="203"/>
    </location>
</feature>
<feature type="domain" description="Toprim" evidence="1">
    <location>
        <begin position="80"/>
        <end position="175"/>
    </location>
</feature>
<feature type="zinc finger region" description="C4-type" evidence="1">
    <location>
        <begin position="57"/>
        <end position="72"/>
    </location>
</feature>
<sequence length="203" mass="22105">MKTPASLESLITALRVLPGVGPKTAQRMAYHLMQRDPGGADRLARAIDHARSHLKHCARCNTFSETELCVLCADDQRRQDVLCVVEMPADALMIEQTHSYDGLYFVLMGKVSPLDGLTARDIPLEQLARRALDGTVNEVILATNFTAEGEATAHVLATLFKDRGLSVSRIARGLPVGGELEHVDAGTLAQALYERRRLSTGDA</sequence>
<accession>C1D5E0</accession>
<organism>
    <name type="scientific">Laribacter hongkongensis (strain HLHK9)</name>
    <dbReference type="NCBI Taxonomy" id="557598"/>
    <lineage>
        <taxon>Bacteria</taxon>
        <taxon>Pseudomonadati</taxon>
        <taxon>Pseudomonadota</taxon>
        <taxon>Betaproteobacteria</taxon>
        <taxon>Neisseriales</taxon>
        <taxon>Aquaspirillaceae</taxon>
        <taxon>Laribacter</taxon>
    </lineage>
</organism>
<gene>
    <name evidence="1" type="primary">recR</name>
    <name type="ordered locus">LHK_00965</name>
</gene>
<comment type="function">
    <text evidence="1">May play a role in DNA repair. It seems to be involved in an RecBC-independent recombinational process of DNA repair. It may act with RecF and RecO.</text>
</comment>
<comment type="similarity">
    <text evidence="1">Belongs to the RecR family.</text>
</comment>
<keyword id="KW-0227">DNA damage</keyword>
<keyword id="KW-0233">DNA recombination</keyword>
<keyword id="KW-0234">DNA repair</keyword>
<keyword id="KW-0479">Metal-binding</keyword>
<keyword id="KW-1185">Reference proteome</keyword>
<keyword id="KW-0862">Zinc</keyword>
<keyword id="KW-0863">Zinc-finger</keyword>
<proteinExistence type="inferred from homology"/>
<protein>
    <recommendedName>
        <fullName evidence="1">Recombination protein RecR</fullName>
    </recommendedName>
</protein>
<evidence type="ECO:0000255" key="1">
    <source>
        <dbReference type="HAMAP-Rule" id="MF_00017"/>
    </source>
</evidence>
<reference key="1">
    <citation type="journal article" date="2009" name="PLoS Genet.">
        <title>The complete genome and proteome of Laribacter hongkongensis reveal potential mechanisms for adaptations to different temperatures and habitats.</title>
        <authorList>
            <person name="Woo P.C.Y."/>
            <person name="Lau S.K.P."/>
            <person name="Tse H."/>
            <person name="Teng J.L.L."/>
            <person name="Curreem S.O."/>
            <person name="Tsang A.K.L."/>
            <person name="Fan R.Y.Y."/>
            <person name="Wong G.K.M."/>
            <person name="Huang Y."/>
            <person name="Loman N.J."/>
            <person name="Snyder L.A.S."/>
            <person name="Cai J.J."/>
            <person name="Huang J.-D."/>
            <person name="Mak W."/>
            <person name="Pallen M.J."/>
            <person name="Lok S."/>
            <person name="Yuen K.-Y."/>
        </authorList>
    </citation>
    <scope>NUCLEOTIDE SEQUENCE [LARGE SCALE GENOMIC DNA]</scope>
    <source>
        <strain>HLHK9</strain>
    </source>
</reference>
<dbReference type="EMBL" id="CP001154">
    <property type="protein sequence ID" value="ACO73957.1"/>
    <property type="molecule type" value="Genomic_DNA"/>
</dbReference>
<dbReference type="RefSeq" id="WP_012696448.1">
    <property type="nucleotide sequence ID" value="NC_012559.1"/>
</dbReference>
<dbReference type="SMR" id="C1D5E0"/>
<dbReference type="STRING" id="557598.LHK_00965"/>
<dbReference type="KEGG" id="lhk:LHK_00965"/>
<dbReference type="eggNOG" id="COG0353">
    <property type="taxonomic scope" value="Bacteria"/>
</dbReference>
<dbReference type="HOGENOM" id="CLU_060739_1_2_4"/>
<dbReference type="Proteomes" id="UP000002010">
    <property type="component" value="Chromosome"/>
</dbReference>
<dbReference type="GO" id="GO:0003677">
    <property type="term" value="F:DNA binding"/>
    <property type="evidence" value="ECO:0007669"/>
    <property type="project" value="UniProtKB-UniRule"/>
</dbReference>
<dbReference type="GO" id="GO:0008270">
    <property type="term" value="F:zinc ion binding"/>
    <property type="evidence" value="ECO:0007669"/>
    <property type="project" value="UniProtKB-KW"/>
</dbReference>
<dbReference type="GO" id="GO:0006310">
    <property type="term" value="P:DNA recombination"/>
    <property type="evidence" value="ECO:0007669"/>
    <property type="project" value="UniProtKB-UniRule"/>
</dbReference>
<dbReference type="GO" id="GO:0006281">
    <property type="term" value="P:DNA repair"/>
    <property type="evidence" value="ECO:0007669"/>
    <property type="project" value="UniProtKB-UniRule"/>
</dbReference>
<dbReference type="CDD" id="cd01025">
    <property type="entry name" value="TOPRIM_recR"/>
    <property type="match status" value="1"/>
</dbReference>
<dbReference type="Gene3D" id="3.40.1360.10">
    <property type="match status" value="1"/>
</dbReference>
<dbReference type="Gene3D" id="1.10.8.420">
    <property type="entry name" value="RecR Domain 1"/>
    <property type="match status" value="1"/>
</dbReference>
<dbReference type="HAMAP" id="MF_00017">
    <property type="entry name" value="RecR"/>
    <property type="match status" value="1"/>
</dbReference>
<dbReference type="InterPro" id="IPR000093">
    <property type="entry name" value="DNA_Rcmb_RecR"/>
</dbReference>
<dbReference type="InterPro" id="IPR023627">
    <property type="entry name" value="Rcmb_RecR"/>
</dbReference>
<dbReference type="InterPro" id="IPR015967">
    <property type="entry name" value="Rcmb_RecR_Znf"/>
</dbReference>
<dbReference type="InterPro" id="IPR006171">
    <property type="entry name" value="TOPRIM_dom"/>
</dbReference>
<dbReference type="InterPro" id="IPR034137">
    <property type="entry name" value="TOPRIM_RecR"/>
</dbReference>
<dbReference type="NCBIfam" id="TIGR00615">
    <property type="entry name" value="recR"/>
    <property type="match status" value="1"/>
</dbReference>
<dbReference type="PANTHER" id="PTHR30446">
    <property type="entry name" value="RECOMBINATION PROTEIN RECR"/>
    <property type="match status" value="1"/>
</dbReference>
<dbReference type="PANTHER" id="PTHR30446:SF0">
    <property type="entry name" value="RECOMBINATION PROTEIN RECR"/>
    <property type="match status" value="1"/>
</dbReference>
<dbReference type="Pfam" id="PF21175">
    <property type="entry name" value="RecR_C"/>
    <property type="match status" value="1"/>
</dbReference>
<dbReference type="Pfam" id="PF21176">
    <property type="entry name" value="RecR_HhH"/>
    <property type="match status" value="1"/>
</dbReference>
<dbReference type="Pfam" id="PF02132">
    <property type="entry name" value="RecR_ZnF"/>
    <property type="match status" value="1"/>
</dbReference>
<dbReference type="Pfam" id="PF13662">
    <property type="entry name" value="Toprim_4"/>
    <property type="match status" value="1"/>
</dbReference>
<dbReference type="SMART" id="SM00493">
    <property type="entry name" value="TOPRIM"/>
    <property type="match status" value="1"/>
</dbReference>
<dbReference type="SUPFAM" id="SSF111304">
    <property type="entry name" value="Recombination protein RecR"/>
    <property type="match status" value="1"/>
</dbReference>
<dbReference type="PROSITE" id="PS50880">
    <property type="entry name" value="TOPRIM"/>
    <property type="match status" value="1"/>
</dbReference>
<name>RECR_LARHH</name>